<gene>
    <name type="primary">PCMP-E96</name>
    <name type="ordered locus">At3g25060</name>
    <name type="ORF">K3G3.8</name>
</gene>
<proteinExistence type="inferred from homology"/>
<feature type="transit peptide" description="Mitochondrion" evidence="1">
    <location>
        <begin position="1"/>
        <end position="80"/>
    </location>
</feature>
<feature type="chain" id="PRO_0000356112" description="Putative pentatricopeptide repeat-containing protein At3g25060, mitochondrial">
    <location>
        <begin position="81"/>
        <end position="601"/>
    </location>
</feature>
<feature type="repeat" description="PPR 1">
    <location>
        <begin position="49"/>
        <end position="79"/>
    </location>
</feature>
<feature type="repeat" description="PPR 2">
    <location>
        <begin position="80"/>
        <end position="114"/>
    </location>
</feature>
<feature type="repeat" description="PPR 3">
    <location>
        <begin position="115"/>
        <end position="149"/>
    </location>
</feature>
<feature type="repeat" description="PPR 4">
    <location>
        <begin position="150"/>
        <end position="180"/>
    </location>
</feature>
<feature type="repeat" description="PPR 5">
    <location>
        <begin position="181"/>
        <end position="215"/>
    </location>
</feature>
<feature type="repeat" description="PPR 6">
    <location>
        <begin position="216"/>
        <end position="250"/>
    </location>
</feature>
<feature type="repeat" description="PPR 7">
    <location>
        <begin position="251"/>
        <end position="281"/>
    </location>
</feature>
<feature type="repeat" description="PPR 8">
    <location>
        <begin position="282"/>
        <end position="316"/>
    </location>
</feature>
<feature type="repeat" description="PPR 9">
    <location>
        <begin position="317"/>
        <end position="347"/>
    </location>
</feature>
<feature type="repeat" description="PPR 10">
    <location>
        <begin position="351"/>
        <end position="381"/>
    </location>
</feature>
<feature type="repeat" description="PPR 11">
    <location>
        <begin position="382"/>
        <end position="416"/>
    </location>
</feature>
<feature type="repeat" description="PPR 12">
    <location>
        <begin position="417"/>
        <end position="452"/>
    </location>
</feature>
<feature type="repeat" description="PPR 13">
    <location>
        <begin position="453"/>
        <end position="487"/>
    </location>
</feature>
<feature type="region of interest" description="Type E motif">
    <location>
        <begin position="488"/>
        <end position="563"/>
    </location>
</feature>
<feature type="region of interest" description="Type E(+) motif">
    <location>
        <begin position="564"/>
        <end position="594"/>
    </location>
</feature>
<evidence type="ECO:0000255" key="1"/>
<evidence type="ECO:0000305" key="2"/>
<reference key="1">
    <citation type="journal article" date="2000" name="DNA Res.">
        <title>Structural analysis of Arabidopsis thaliana chromosome 3. II. Sequence features of the 4,251,695 bp regions covered by 90 P1, TAC and BAC clones.</title>
        <authorList>
            <person name="Kaneko T."/>
            <person name="Katoh T."/>
            <person name="Sato S."/>
            <person name="Nakamura Y."/>
            <person name="Asamizu E."/>
            <person name="Tabata S."/>
        </authorList>
    </citation>
    <scope>NUCLEOTIDE SEQUENCE [LARGE SCALE GENOMIC DNA]</scope>
    <source>
        <strain>cv. Columbia</strain>
    </source>
</reference>
<reference key="2">
    <citation type="journal article" date="2017" name="Plant J.">
        <title>Araport11: a complete reannotation of the Arabidopsis thaliana reference genome.</title>
        <authorList>
            <person name="Cheng C.Y."/>
            <person name="Krishnakumar V."/>
            <person name="Chan A.P."/>
            <person name="Thibaud-Nissen F."/>
            <person name="Schobel S."/>
            <person name="Town C.D."/>
        </authorList>
    </citation>
    <scope>GENOME REANNOTATION</scope>
    <source>
        <strain>cv. Columbia</strain>
    </source>
</reference>
<reference key="3">
    <citation type="journal article" date="2004" name="Plant Cell">
        <title>Genome-wide analysis of Arabidopsis pentatricopeptide repeat proteins reveals their essential role in organelle biogenesis.</title>
        <authorList>
            <person name="Lurin C."/>
            <person name="Andres C."/>
            <person name="Aubourg S."/>
            <person name="Bellaoui M."/>
            <person name="Bitton F."/>
            <person name="Bruyere C."/>
            <person name="Caboche M."/>
            <person name="Debast C."/>
            <person name="Gualberto J."/>
            <person name="Hoffmann B."/>
            <person name="Lecharny A."/>
            <person name="Le Ret M."/>
            <person name="Martin-Magniette M.-L."/>
            <person name="Mireau H."/>
            <person name="Peeters N."/>
            <person name="Renou J.-P."/>
            <person name="Szurek B."/>
            <person name="Taconnat L."/>
            <person name="Small I."/>
        </authorList>
    </citation>
    <scope>GENE FAMILY</scope>
</reference>
<sequence>MVQTKHFCMLHRTLLCPKRIKFLQSISKLKRHITQIHAFVISTGNLLNGSSISRDLIASCGRIGEISYARKVFDELPQRGVSVYNSMIVVYSRGKNPDEVLRLYDQMIAEKIQPDSSTFTMTIKACLSGLVLEKGEAVWCKAVDFGYKNDVFVCSSVLNLYMKCGKMDEAEVLFGKMAKRDVICWTTMVTGFAQAGKSLKAVEFYREMQNEGFGRDRVVMLGLLQASGDLGDTKMGRSVHGYLYRTGLPMNVVVETSLVDMYAKVGFIEVASRVFSRMMFKTAVSWGSLISGFAQNGLANKAFEAVVEMQSLGFQPDLVTLVGVLVACSQVGSLKTGRLVHCYILKRHVLDRVTATALMDMYSKCGALSSSREIFEHVGRKDLVCWNTMISCYGIHGNGQEVVSLFLKMTESNIEPDHATFASLLSALSHSGLVEQGQHWFSVMINKYKIQPSEKHYVCLIDLLARAGRVEEALDMINSEKLDNALPIWVALLSGCINHRNLSVGDIAANKILQLNPDSIGIQTLVSNFFATANKWKEVAKVRKLMRNGAMEKVPGYSAIEVNGELRTFLMEDLSHHEHYHMLQVLRNLKTEIRDVCSGVE</sequence>
<protein>
    <recommendedName>
        <fullName>Putative pentatricopeptide repeat-containing protein At3g25060, mitochondrial</fullName>
    </recommendedName>
</protein>
<dbReference type="EMBL" id="AP000412">
    <property type="protein sequence ID" value="BAB01891.1"/>
    <property type="molecule type" value="Genomic_DNA"/>
</dbReference>
<dbReference type="EMBL" id="CP002686">
    <property type="protein sequence ID" value="AEE76973.1"/>
    <property type="molecule type" value="Genomic_DNA"/>
</dbReference>
<dbReference type="RefSeq" id="NP_189142.1">
    <property type="nucleotide sequence ID" value="NM_113410.2"/>
</dbReference>
<dbReference type="SMR" id="Q9LJR6"/>
<dbReference type="FunCoup" id="Q9LJR6">
    <property type="interactions" value="30"/>
</dbReference>
<dbReference type="PaxDb" id="3702-AT3G25060.1"/>
<dbReference type="ProteomicsDB" id="249101"/>
<dbReference type="EnsemblPlants" id="AT3G25060.1">
    <property type="protein sequence ID" value="AT3G25060.1"/>
    <property type="gene ID" value="AT3G25060"/>
</dbReference>
<dbReference type="GeneID" id="822097"/>
<dbReference type="Gramene" id="AT3G25060.1">
    <property type="protein sequence ID" value="AT3G25060.1"/>
    <property type="gene ID" value="AT3G25060"/>
</dbReference>
<dbReference type="KEGG" id="ath:AT3G25060"/>
<dbReference type="Araport" id="AT3G25060"/>
<dbReference type="TAIR" id="AT3G25060">
    <property type="gene designation" value="MEF25"/>
</dbReference>
<dbReference type="eggNOG" id="KOG4197">
    <property type="taxonomic scope" value="Eukaryota"/>
</dbReference>
<dbReference type="HOGENOM" id="CLU_002706_0_1_1"/>
<dbReference type="InParanoid" id="Q9LJR6"/>
<dbReference type="OMA" id="STHGCIT"/>
<dbReference type="OrthoDB" id="185373at2759"/>
<dbReference type="PhylomeDB" id="Q9LJR6"/>
<dbReference type="PRO" id="PR:Q9LJR6"/>
<dbReference type="Proteomes" id="UP000006548">
    <property type="component" value="Chromosome 3"/>
</dbReference>
<dbReference type="ExpressionAtlas" id="Q9LJR6">
    <property type="expression patterns" value="baseline and differential"/>
</dbReference>
<dbReference type="GO" id="GO:0005739">
    <property type="term" value="C:mitochondrion"/>
    <property type="evidence" value="ECO:0007669"/>
    <property type="project" value="UniProtKB-SubCell"/>
</dbReference>
<dbReference type="GO" id="GO:0003723">
    <property type="term" value="F:RNA binding"/>
    <property type="evidence" value="ECO:0007669"/>
    <property type="project" value="InterPro"/>
</dbReference>
<dbReference type="GO" id="GO:0009451">
    <property type="term" value="P:RNA modification"/>
    <property type="evidence" value="ECO:0007669"/>
    <property type="project" value="InterPro"/>
</dbReference>
<dbReference type="FunFam" id="1.25.40.10:FF:000031">
    <property type="entry name" value="Pentatricopeptide repeat-containing protein mitochondrial"/>
    <property type="match status" value="1"/>
</dbReference>
<dbReference type="FunFam" id="1.25.40.10:FF:000090">
    <property type="entry name" value="Pentatricopeptide repeat-containing protein, chloroplastic"/>
    <property type="match status" value="1"/>
</dbReference>
<dbReference type="FunFam" id="1.25.40.10:FF:000462">
    <property type="entry name" value="Pentatricopeptide repeat-containing protein, chloroplastic"/>
    <property type="match status" value="1"/>
</dbReference>
<dbReference type="FunFam" id="1.25.40.10:FF:001159">
    <property type="entry name" value="Putative pentatricopeptide repeat-containing protein At3g25060, mitochondrial"/>
    <property type="match status" value="1"/>
</dbReference>
<dbReference type="Gene3D" id="1.25.40.10">
    <property type="entry name" value="Tetratricopeptide repeat domain"/>
    <property type="match status" value="4"/>
</dbReference>
<dbReference type="InterPro" id="IPR046848">
    <property type="entry name" value="E_motif"/>
</dbReference>
<dbReference type="InterPro" id="IPR002885">
    <property type="entry name" value="Pentatricopeptide_rpt"/>
</dbReference>
<dbReference type="InterPro" id="IPR046960">
    <property type="entry name" value="PPR_At4g14850-like_plant"/>
</dbReference>
<dbReference type="InterPro" id="IPR011990">
    <property type="entry name" value="TPR-like_helical_dom_sf"/>
</dbReference>
<dbReference type="NCBIfam" id="TIGR00756">
    <property type="entry name" value="PPR"/>
    <property type="match status" value="5"/>
</dbReference>
<dbReference type="PANTHER" id="PTHR47926:SF405">
    <property type="entry name" value="DYW DOMAIN-CONTAINING PROTEIN"/>
    <property type="match status" value="1"/>
</dbReference>
<dbReference type="PANTHER" id="PTHR47926">
    <property type="entry name" value="PENTATRICOPEPTIDE REPEAT-CONTAINING PROTEIN"/>
    <property type="match status" value="1"/>
</dbReference>
<dbReference type="Pfam" id="PF20431">
    <property type="entry name" value="E_motif"/>
    <property type="match status" value="1"/>
</dbReference>
<dbReference type="Pfam" id="PF01535">
    <property type="entry name" value="PPR"/>
    <property type="match status" value="5"/>
</dbReference>
<dbReference type="Pfam" id="PF13041">
    <property type="entry name" value="PPR_2"/>
    <property type="match status" value="2"/>
</dbReference>
<dbReference type="PROSITE" id="PS51375">
    <property type="entry name" value="PPR"/>
    <property type="match status" value="13"/>
</dbReference>
<accession>Q9LJR6</accession>
<name>PP253_ARATH</name>
<comment type="subcellular location">
    <subcellularLocation>
        <location evidence="2">Mitochondrion</location>
    </subcellularLocation>
</comment>
<comment type="similarity">
    <text evidence="2">Belongs to the PPR family. PCMP-E subfamily.</text>
</comment>
<comment type="online information" name="Pentatricopeptide repeat proteins">
    <link uri="https://ppr.plantenergy.uwa.edu.au"/>
</comment>
<keyword id="KW-0496">Mitochondrion</keyword>
<keyword id="KW-1185">Reference proteome</keyword>
<keyword id="KW-0677">Repeat</keyword>
<keyword id="KW-0809">Transit peptide</keyword>
<organism>
    <name type="scientific">Arabidopsis thaliana</name>
    <name type="common">Mouse-ear cress</name>
    <dbReference type="NCBI Taxonomy" id="3702"/>
    <lineage>
        <taxon>Eukaryota</taxon>
        <taxon>Viridiplantae</taxon>
        <taxon>Streptophyta</taxon>
        <taxon>Embryophyta</taxon>
        <taxon>Tracheophyta</taxon>
        <taxon>Spermatophyta</taxon>
        <taxon>Magnoliopsida</taxon>
        <taxon>eudicotyledons</taxon>
        <taxon>Gunneridae</taxon>
        <taxon>Pentapetalae</taxon>
        <taxon>rosids</taxon>
        <taxon>malvids</taxon>
        <taxon>Brassicales</taxon>
        <taxon>Brassicaceae</taxon>
        <taxon>Camelineae</taxon>
        <taxon>Arabidopsis</taxon>
    </lineage>
</organism>